<keyword id="KW-0001">2Fe-2S</keyword>
<keyword id="KW-0408">Iron</keyword>
<keyword id="KW-0411">Iron-sulfur</keyword>
<keyword id="KW-0479">Metal-binding</keyword>
<keyword id="KW-0503">Monooxygenase</keyword>
<keyword id="KW-0520">NAD</keyword>
<keyword id="KW-0560">Oxidoreductase</keyword>
<name>GBMOO_PSEAB</name>
<accession>A0A0H2ZIF3</accession>
<proteinExistence type="evidence at transcript level"/>
<evidence type="ECO:0000250" key="1">
    <source>
        <dbReference type="UniProtKB" id="Q1QYU7"/>
    </source>
</evidence>
<evidence type="ECO:0000250" key="2">
    <source>
        <dbReference type="UniProtKB" id="Q53122"/>
    </source>
</evidence>
<evidence type="ECO:0000255" key="3">
    <source>
        <dbReference type="PROSITE-ProRule" id="PRU00628"/>
    </source>
</evidence>
<evidence type="ECO:0000269" key="4">
    <source>
    </source>
</evidence>
<evidence type="ECO:0000303" key="5">
    <source>
    </source>
</evidence>
<evidence type="ECO:0000305" key="6"/>
<evidence type="ECO:0000305" key="7">
    <source>
    </source>
</evidence>
<evidence type="ECO:0000312" key="8">
    <source>
        <dbReference type="EMBL" id="ABJ14794.1"/>
    </source>
</evidence>
<feature type="chain" id="PRO_0000459093" description="Glycine betaine monooxygenase oxygenase subunit">
    <location>
        <begin position="1"/>
        <end position="429"/>
    </location>
</feature>
<feature type="domain" description="Rieske" evidence="3">
    <location>
        <begin position="56"/>
        <end position="163"/>
    </location>
</feature>
<feature type="binding site" evidence="3">
    <location>
        <position position="98"/>
    </location>
    <ligand>
        <name>[2Fe-2S] cluster</name>
        <dbReference type="ChEBI" id="CHEBI:190135"/>
    </ligand>
</feature>
<feature type="binding site" evidence="3">
    <location>
        <position position="100"/>
    </location>
    <ligand>
        <name>[2Fe-2S] cluster</name>
        <dbReference type="ChEBI" id="CHEBI:190135"/>
    </ligand>
</feature>
<feature type="binding site" evidence="3">
    <location>
        <position position="118"/>
    </location>
    <ligand>
        <name>[2Fe-2S] cluster</name>
        <dbReference type="ChEBI" id="CHEBI:190135"/>
    </ligand>
</feature>
<feature type="binding site" evidence="3">
    <location>
        <position position="121"/>
    </location>
    <ligand>
        <name>[2Fe-2S] cluster</name>
        <dbReference type="ChEBI" id="CHEBI:190135"/>
    </ligand>
</feature>
<feature type="binding site" evidence="2">
    <location>
        <position position="217"/>
    </location>
    <ligand>
        <name>Fe cation</name>
        <dbReference type="ChEBI" id="CHEBI:24875"/>
    </ligand>
</feature>
<feature type="binding site" evidence="2">
    <location>
        <position position="222"/>
    </location>
    <ligand>
        <name>Fe cation</name>
        <dbReference type="ChEBI" id="CHEBI:24875"/>
    </ligand>
</feature>
<dbReference type="EC" id="1.14.13.251" evidence="1"/>
<dbReference type="EMBL" id="CP000438">
    <property type="protein sequence ID" value="ABJ14794.1"/>
    <property type="molecule type" value="Genomic_DNA"/>
</dbReference>
<dbReference type="RefSeq" id="WP_003142076.1">
    <property type="nucleotide sequence ID" value="NZ_CP034244.1"/>
</dbReference>
<dbReference type="SMR" id="A0A0H2ZIF3"/>
<dbReference type="KEGG" id="pau:PA14_71410"/>
<dbReference type="HOGENOM" id="CLU_026244_3_0_6"/>
<dbReference type="BioCyc" id="PAER208963:G1G74-6010-MONOMER"/>
<dbReference type="Proteomes" id="UP000000653">
    <property type="component" value="Chromosome"/>
</dbReference>
<dbReference type="GO" id="GO:0051537">
    <property type="term" value="F:2 iron, 2 sulfur cluster binding"/>
    <property type="evidence" value="ECO:0007669"/>
    <property type="project" value="UniProtKB-KW"/>
</dbReference>
<dbReference type="GO" id="GO:0005506">
    <property type="term" value="F:iron ion binding"/>
    <property type="evidence" value="ECO:0007669"/>
    <property type="project" value="InterPro"/>
</dbReference>
<dbReference type="GO" id="GO:0004497">
    <property type="term" value="F:monooxygenase activity"/>
    <property type="evidence" value="ECO:0007669"/>
    <property type="project" value="UniProtKB-KW"/>
</dbReference>
<dbReference type="CDD" id="cd08884">
    <property type="entry name" value="RHO_alpha_C_GbcA-like"/>
    <property type="match status" value="1"/>
</dbReference>
<dbReference type="CDD" id="cd03469">
    <property type="entry name" value="Rieske_RO_Alpha_N"/>
    <property type="match status" value="1"/>
</dbReference>
<dbReference type="FunFam" id="2.102.10.10:FF:000020">
    <property type="entry name" value="Aromatic ring-hydroxylating dioxygenase subunit alpha"/>
    <property type="match status" value="1"/>
</dbReference>
<dbReference type="Gene3D" id="3.90.380.10">
    <property type="entry name" value="Naphthalene 1,2-dioxygenase Alpha Subunit, Chain A, domain 1"/>
    <property type="match status" value="1"/>
</dbReference>
<dbReference type="Gene3D" id="2.102.10.10">
    <property type="entry name" value="Rieske [2Fe-2S] iron-sulphur domain"/>
    <property type="match status" value="1"/>
</dbReference>
<dbReference type="InterPro" id="IPR017941">
    <property type="entry name" value="Rieske_2Fe-2S"/>
</dbReference>
<dbReference type="InterPro" id="IPR036922">
    <property type="entry name" value="Rieske_2Fe-2S_sf"/>
</dbReference>
<dbReference type="InterPro" id="IPR015879">
    <property type="entry name" value="Ring_hydroxy_dOase_asu_C_dom"/>
</dbReference>
<dbReference type="InterPro" id="IPR001663">
    <property type="entry name" value="Rng_hydr_dOase-A"/>
</dbReference>
<dbReference type="PANTHER" id="PTHR43756">
    <property type="entry name" value="CHOLINE MONOOXYGENASE, CHLOROPLASTIC"/>
    <property type="match status" value="1"/>
</dbReference>
<dbReference type="PANTHER" id="PTHR43756:SF5">
    <property type="entry name" value="CHOLINE MONOOXYGENASE, CHLOROPLASTIC"/>
    <property type="match status" value="1"/>
</dbReference>
<dbReference type="Pfam" id="PF00355">
    <property type="entry name" value="Rieske"/>
    <property type="match status" value="1"/>
</dbReference>
<dbReference type="Pfam" id="PF00848">
    <property type="entry name" value="Ring_hydroxyl_A"/>
    <property type="match status" value="1"/>
</dbReference>
<dbReference type="PRINTS" id="PR00090">
    <property type="entry name" value="RNGDIOXGNASE"/>
</dbReference>
<dbReference type="SUPFAM" id="SSF55961">
    <property type="entry name" value="Bet v1-like"/>
    <property type="match status" value="1"/>
</dbReference>
<dbReference type="SUPFAM" id="SSF50022">
    <property type="entry name" value="ISP domain"/>
    <property type="match status" value="1"/>
</dbReference>
<dbReference type="PROSITE" id="PS51296">
    <property type="entry name" value="RIESKE"/>
    <property type="match status" value="1"/>
</dbReference>
<reference key="1">
    <citation type="journal article" date="2006" name="Genome Biol.">
        <title>Genomic analysis reveals that Pseudomonas aeruginosa virulence is combinatorial.</title>
        <authorList>
            <person name="Lee D.G."/>
            <person name="Urbach J.M."/>
            <person name="Wu G."/>
            <person name="Liberati N.T."/>
            <person name="Feinbaum R.L."/>
            <person name="Miyata S."/>
            <person name="Diggins L.T."/>
            <person name="He J."/>
            <person name="Saucier M."/>
            <person name="Deziel E."/>
            <person name="Friedman L."/>
            <person name="Li L."/>
            <person name="Grills G."/>
            <person name="Montgomery K."/>
            <person name="Kucherlapati R."/>
            <person name="Rahme L.G."/>
            <person name="Ausubel F.M."/>
        </authorList>
    </citation>
    <scope>NUCLEOTIDE SEQUENCE [LARGE SCALE GENOMIC DNA]</scope>
    <source>
        <strain>UCBPP-PA14</strain>
    </source>
</reference>
<reference key="2">
    <citation type="journal article" date="2008" name="J. Bacteriol.">
        <title>Identification of two gene clusters and a transcriptional regulator required for Pseudomonas aeruginosa glycine betaine catabolism.</title>
        <authorList>
            <person name="Wargo M.J."/>
            <person name="Szwergold B.S."/>
            <person name="Hogan D.A."/>
        </authorList>
    </citation>
    <scope>FUNCTION</scope>
    <scope>INDUCTION</scope>
    <scope>DISRUPTION PHENOTYPE</scope>
    <source>
        <strain>UCBPP-PA14</strain>
    </source>
</reference>
<organism>
    <name type="scientific">Pseudomonas aeruginosa (strain UCBPP-PA14)</name>
    <dbReference type="NCBI Taxonomy" id="208963"/>
    <lineage>
        <taxon>Bacteria</taxon>
        <taxon>Pseudomonadati</taxon>
        <taxon>Pseudomonadota</taxon>
        <taxon>Gammaproteobacteria</taxon>
        <taxon>Pseudomonadales</taxon>
        <taxon>Pseudomonadaceae</taxon>
        <taxon>Pseudomonas</taxon>
    </lineage>
</organism>
<protein>
    <recommendedName>
        <fullName evidence="6">Glycine betaine monooxygenase oxygenase subunit</fullName>
        <ecNumber evidence="1">1.14.13.251</ecNumber>
    </recommendedName>
    <alternativeName>
        <fullName evidence="5">Glycine betaine catabolism A</fullName>
    </alternativeName>
</protein>
<gene>
    <name evidence="5" type="primary">gbcA</name>
    <name evidence="8" type="ordered locus">PA14_71410</name>
</gene>
<comment type="function">
    <text evidence="4 6">Involved in degradation of glycine betaine (PubMed:17951379). Part of a Rieske-type oxygenase system that catalyzes the conversion of glycine betaine (GB) to dimethylglycine (DMG) (PubMed:17951379). This subunit is the terminal oxygenase component of the system (Probable).</text>
</comment>
<comment type="catalytic activity">
    <reaction evidence="1">
        <text>glycine betaine + NADH + O2 + H(+) = N,N-dimethylglycine + formaldehyde + NAD(+) + H2O</text>
        <dbReference type="Rhea" id="RHEA:45700"/>
        <dbReference type="ChEBI" id="CHEBI:15377"/>
        <dbReference type="ChEBI" id="CHEBI:15378"/>
        <dbReference type="ChEBI" id="CHEBI:15379"/>
        <dbReference type="ChEBI" id="CHEBI:16842"/>
        <dbReference type="ChEBI" id="CHEBI:17750"/>
        <dbReference type="ChEBI" id="CHEBI:57540"/>
        <dbReference type="ChEBI" id="CHEBI:57945"/>
        <dbReference type="ChEBI" id="CHEBI:58251"/>
        <dbReference type="EC" id="1.14.13.251"/>
    </reaction>
    <physiologicalReaction direction="left-to-right" evidence="1">
        <dbReference type="Rhea" id="RHEA:45701"/>
    </physiologicalReaction>
</comment>
<comment type="cofactor">
    <cofactor evidence="1">
        <name>[2Fe-2S] cluster</name>
        <dbReference type="ChEBI" id="CHEBI:190135"/>
    </cofactor>
    <text evidence="1">Binds 1 [2Fe-2S] cluster per subunit.</text>
</comment>
<comment type="cofactor">
    <cofactor evidence="1">
        <name>Fe cation</name>
        <dbReference type="ChEBI" id="CHEBI:24875"/>
    </cofactor>
    <text evidence="1">Binds 1 Fe cation per subunit.</text>
</comment>
<comment type="subunit">
    <text evidence="7">The system is composed of an oxygenase subunit (GbcA) and a reductase subunit (GbcB).</text>
</comment>
<comment type="induction">
    <text evidence="4">Transcriptionally regulated by GbdR (PubMed:17951379). Expression is induced by growth on glycine betaine or dimethylglycine, but not by growth on pyruvate or sarcosine (PubMed:17951379).</text>
</comment>
<comment type="disruption phenotype">
    <text evidence="4">Mutant is unable to grow on choline or glycine betaine as a sole carbon source, but it can grow on dimethylglycine (PubMed:17951379). The gbcA-gbcB double mutant cannot grow on choline or glycine betaine as a sole carbon or nitrogen source, but it can grow in minimal medium with glucose or pyruvate as the sole carbon source (PubMed:17951379).</text>
</comment>
<comment type="similarity">
    <text evidence="6">Belongs to the bacterial ring-hydroxylating dioxygenase alpha subunit family.</text>
</comment>
<sequence>MDVTSTLSLGDPLEPARKATADMLRSRDHSFSLPQPFYCDQRLFEIDMQEIFHKEWLIAGMTCEIPAKGNFLTLQIGKNPVLVIRGAEGQVHAFHNVCRHRGSRLCVSEKGKVAKLVCPYHQWTYELDGRLLFAGTEMGADFDMKEYGLKPIQVKTAGGYIFISLAENPPAIDDFLATLEHYMEPYDMENAKVAVQTTIREAANWKLVIENNRECYHCNGSHPELLKTLLEWDDVTDPRASQAFKDQVAACTSAWEAEKIPYAHASFGLRNRIVRMPLLDGTVSMTMDGKQGSKKLMGRIKNPDLGSMRILHLPHSWNHCMGDHLIVFTVWPISAQETLVTTKWLVHKDAVEGVDYDVARLREVWDATNDQDRRLAEENQRGINSDAYQPGPYSKTYEFGVINFLDWYSERMLNNLGEESAHVRKVAGS</sequence>